<evidence type="ECO:0000250" key="1"/>
<evidence type="ECO:0000256" key="2">
    <source>
        <dbReference type="SAM" id="MobiDB-lite"/>
    </source>
</evidence>
<evidence type="ECO:0000269" key="3">
    <source>
    </source>
</evidence>
<evidence type="ECO:0000305" key="4"/>
<keyword id="KW-0012">Acyltransferase</keyword>
<keyword id="KW-0284">Flavonoid biosynthesis</keyword>
<keyword id="KW-0808">Transferase</keyword>
<feature type="chain" id="PRO_0000422578" description="Octaketide synthase 3">
    <location>
        <begin position="1"/>
        <end position="405"/>
    </location>
</feature>
<feature type="region of interest" description="Disordered" evidence="2">
    <location>
        <begin position="1"/>
        <end position="22"/>
    </location>
</feature>
<feature type="compositionally biased region" description="Polar residues" evidence="2">
    <location>
        <begin position="1"/>
        <end position="10"/>
    </location>
</feature>
<feature type="active site" evidence="1">
    <location>
        <position position="176"/>
    </location>
</feature>
<feature type="binding site" evidence="1">
    <location>
        <position position="283"/>
    </location>
    <ligand>
        <name>CoA</name>
        <dbReference type="ChEBI" id="CHEBI:57287"/>
    </ligand>
</feature>
<feature type="binding site" evidence="1">
    <location>
        <begin position="320"/>
        <end position="323"/>
    </location>
    <ligand>
        <name>CoA</name>
        <dbReference type="ChEBI" id="CHEBI:57287"/>
    </ligand>
</feature>
<feature type="site" description="Determines the polyketide chain length and product specificity" evidence="1">
    <location>
        <position position="209"/>
    </location>
</feature>
<comment type="function">
    <text evidence="3">Catalyzes the iterative condensations of 8 molecules of malonyl-CoA to produce aromatic octaketides, SEK4 and SEK4b, the products of the minimal polyketide synthase for the benzoisochromanequinone actinorhodin. May be involved in the biosynthesis of the octaketide barbaloin.</text>
</comment>
<comment type="pathway">
    <text>Secondary metabolite biosynthesis; flavonoid biosynthesis.</text>
</comment>
<comment type="subunit">
    <text evidence="1">Homodimer.</text>
</comment>
<comment type="miscellaneous">
    <text>A.arborescens is a medicinal plant rich in aromatic polyketides, such as pharmaceutically important aloenin (hexaketide), aloesin (heptaketide) and barbaloin (octaketide).</text>
</comment>
<comment type="similarity">
    <text evidence="4">Belongs to the thiolase-like superfamily. Chalcone/stilbene synthases family.</text>
</comment>
<dbReference type="EC" id="2.3.1.-"/>
<dbReference type="EMBL" id="FJ536167">
    <property type="protein sequence ID" value="ACR19998.1"/>
    <property type="molecule type" value="mRNA"/>
</dbReference>
<dbReference type="SMR" id="C4NF91"/>
<dbReference type="BioCyc" id="MetaCyc:MONOMER-15019"/>
<dbReference type="UniPathway" id="UPA00154"/>
<dbReference type="GO" id="GO:0016747">
    <property type="term" value="F:acyltransferase activity, transferring groups other than amino-acyl groups"/>
    <property type="evidence" value="ECO:0000314"/>
    <property type="project" value="UniProtKB"/>
</dbReference>
<dbReference type="GO" id="GO:0009813">
    <property type="term" value="P:flavonoid biosynthetic process"/>
    <property type="evidence" value="ECO:0000314"/>
    <property type="project" value="UniProtKB"/>
</dbReference>
<dbReference type="GO" id="GO:0030639">
    <property type="term" value="P:polyketide biosynthetic process"/>
    <property type="evidence" value="ECO:0007669"/>
    <property type="project" value="TreeGrafter"/>
</dbReference>
<dbReference type="CDD" id="cd00831">
    <property type="entry name" value="CHS_like"/>
    <property type="match status" value="1"/>
</dbReference>
<dbReference type="FunFam" id="3.40.47.10:FF:000014">
    <property type="entry name" value="Chalcone synthase 1"/>
    <property type="match status" value="1"/>
</dbReference>
<dbReference type="FunFam" id="3.40.47.10:FF:000025">
    <property type="entry name" value="Chalcone synthase 2"/>
    <property type="match status" value="1"/>
</dbReference>
<dbReference type="Gene3D" id="3.40.47.10">
    <property type="match status" value="2"/>
</dbReference>
<dbReference type="InterPro" id="IPR012328">
    <property type="entry name" value="Chalcone/stilbene_synt_C"/>
</dbReference>
<dbReference type="InterPro" id="IPR001099">
    <property type="entry name" value="Chalcone/stilbene_synt_N"/>
</dbReference>
<dbReference type="InterPro" id="IPR011141">
    <property type="entry name" value="Polyketide_synthase_type-III"/>
</dbReference>
<dbReference type="InterPro" id="IPR016039">
    <property type="entry name" value="Thiolase-like"/>
</dbReference>
<dbReference type="PANTHER" id="PTHR11877:SF80">
    <property type="entry name" value="CHALCONE SYNTHASE 1"/>
    <property type="match status" value="1"/>
</dbReference>
<dbReference type="PANTHER" id="PTHR11877">
    <property type="entry name" value="HYDROXYMETHYLGLUTARYL-COA SYNTHASE"/>
    <property type="match status" value="1"/>
</dbReference>
<dbReference type="Pfam" id="PF02797">
    <property type="entry name" value="Chal_sti_synt_C"/>
    <property type="match status" value="1"/>
</dbReference>
<dbReference type="Pfam" id="PF00195">
    <property type="entry name" value="Chal_sti_synt_N"/>
    <property type="match status" value="1"/>
</dbReference>
<dbReference type="PIRSF" id="PIRSF000451">
    <property type="entry name" value="PKS_III"/>
    <property type="match status" value="1"/>
</dbReference>
<dbReference type="SUPFAM" id="SSF53901">
    <property type="entry name" value="Thiolase-like"/>
    <property type="match status" value="2"/>
</dbReference>
<name>PKS5_ALOAR</name>
<sequence>MGSIAESSPLMSRENVEGIRKAQRAEGTATVMAIGTAHPPHIFPQDTYADFYFRATNSEHKVELKKKFDRICKKTMIGKRYFNYDEEFLKKYPNITSFDEPSLNDRQDICVPGVPALGKEAALKAIEEWGQPLSKITHLVFCTSCGVDMPSADFQLAKLLGLNTNVNKYCVYMQGCYAGGTVLRYAKDLAENNRGSRVLVVCAELTIIGLRGPNESHLDNAIGNSLFGDGAAALIVGADPIVGIEKPIFEIVCAKQTVIPDSEDVIHLHLREAGLMFYMSKDSPETISNNVEGCLVDIFKSVGMTPPADWNSLFWIPHPGGRAILDEVEARLKLRPEKFRATRHVLWEYGNMVSACVLYILDEMRNKSAADGLGTYGEGLEWGVLLGFGPGMTVETILLHSLPPV</sequence>
<accession>C4NF91</accession>
<protein>
    <recommendedName>
        <fullName>Octaketide synthase 3</fullName>
        <shortName>OKS 3</shortName>
        <ecNumber>2.3.1.-</ecNumber>
    </recommendedName>
    <alternativeName>
        <fullName>Polyketide synthase 5</fullName>
    </alternativeName>
</protein>
<gene>
    <name type="primary">PKS5</name>
</gene>
<reference key="1">
    <citation type="journal article" date="2009" name="FEBS J.">
        <title>Novel type III polyketide synthases from Aloe arborescens.</title>
        <authorList>
            <person name="Mizuuchi Y."/>
            <person name="Shi S.P."/>
            <person name="Wanibuchi K."/>
            <person name="Kojima A."/>
            <person name="Morita H."/>
            <person name="Noguchi H."/>
            <person name="Abe I."/>
        </authorList>
    </citation>
    <scope>NUCLEOTIDE SEQUENCE [MRNA]</scope>
    <scope>FUNCTION</scope>
    <scope>CATALYTIC ACTIVITY</scope>
</reference>
<proteinExistence type="evidence at protein level"/>
<organism>
    <name type="scientific">Aloe arborescens</name>
    <name type="common">Kidachi aloe</name>
    <dbReference type="NCBI Taxonomy" id="45385"/>
    <lineage>
        <taxon>Eukaryota</taxon>
        <taxon>Viridiplantae</taxon>
        <taxon>Streptophyta</taxon>
        <taxon>Embryophyta</taxon>
        <taxon>Tracheophyta</taxon>
        <taxon>Spermatophyta</taxon>
        <taxon>Magnoliopsida</taxon>
        <taxon>Liliopsida</taxon>
        <taxon>Asparagales</taxon>
        <taxon>Asphodelaceae</taxon>
        <taxon>Asphodeloideae</taxon>
        <taxon>Aloe</taxon>
    </lineage>
</organism>